<dbReference type="EMBL" id="CH981526">
    <property type="protein sequence ID" value="EDK44323.1"/>
    <property type="molecule type" value="Genomic_DNA"/>
</dbReference>
<dbReference type="RefSeq" id="XP_001525944.1">
    <property type="nucleotide sequence ID" value="XM_001525894.1"/>
</dbReference>
<dbReference type="SMR" id="A5DYR5"/>
<dbReference type="FunCoup" id="A5DYR5">
    <property type="interactions" value="294"/>
</dbReference>
<dbReference type="STRING" id="379508.A5DYR5"/>
<dbReference type="GeneID" id="5233485"/>
<dbReference type="KEGG" id="lel:PVL30_003340"/>
<dbReference type="VEuPathDB" id="FungiDB:LELG_02502"/>
<dbReference type="eggNOG" id="KOG4771">
    <property type="taxonomic scope" value="Eukaryota"/>
</dbReference>
<dbReference type="HOGENOM" id="CLU_078857_0_0_1"/>
<dbReference type="InParanoid" id="A5DYR5"/>
<dbReference type="OMA" id="MQQTEAD"/>
<dbReference type="OrthoDB" id="285729at2759"/>
<dbReference type="Proteomes" id="UP000001996">
    <property type="component" value="Unassembled WGS sequence"/>
</dbReference>
<dbReference type="GO" id="GO:0005730">
    <property type="term" value="C:nucleolus"/>
    <property type="evidence" value="ECO:0007669"/>
    <property type="project" value="UniProtKB-SubCell"/>
</dbReference>
<dbReference type="GO" id="GO:0030687">
    <property type="term" value="C:preribosome, large subunit precursor"/>
    <property type="evidence" value="ECO:0007669"/>
    <property type="project" value="EnsemblFungi"/>
</dbReference>
<dbReference type="GO" id="GO:0042273">
    <property type="term" value="P:ribosomal large subunit biogenesis"/>
    <property type="evidence" value="ECO:0007669"/>
    <property type="project" value="EnsemblFungi"/>
</dbReference>
<dbReference type="GO" id="GO:0006364">
    <property type="term" value="P:rRNA processing"/>
    <property type="evidence" value="ECO:0007669"/>
    <property type="project" value="UniProtKB-KW"/>
</dbReference>
<dbReference type="InterPro" id="IPR019002">
    <property type="entry name" value="Ribosome_biogenesis_Nop16"/>
</dbReference>
<dbReference type="PANTHER" id="PTHR13243">
    <property type="entry name" value="HSPC111 PROTEIN-RELATED"/>
    <property type="match status" value="1"/>
</dbReference>
<dbReference type="PANTHER" id="PTHR13243:SF1">
    <property type="entry name" value="NUCLEOLAR PROTEIN 16"/>
    <property type="match status" value="1"/>
</dbReference>
<dbReference type="Pfam" id="PF09420">
    <property type="entry name" value="Nop16"/>
    <property type="match status" value="1"/>
</dbReference>
<accession>A5DYR5</accession>
<keyword id="KW-0539">Nucleus</keyword>
<keyword id="KW-1185">Reference proteome</keyword>
<keyword id="KW-0687">Ribonucleoprotein</keyword>
<keyword id="KW-0690">Ribosome biogenesis</keyword>
<keyword id="KW-0698">rRNA processing</keyword>
<gene>
    <name type="primary">NOP16</name>
    <name type="ORF">LELG_02502</name>
</gene>
<evidence type="ECO:0000250" key="1"/>
<evidence type="ECO:0000256" key="2">
    <source>
        <dbReference type="SAM" id="MobiDB-lite"/>
    </source>
</evidence>
<evidence type="ECO:0000305" key="3"/>
<comment type="function">
    <text evidence="1">Involved in the biogenesis of the 60S ribosomal subunit.</text>
</comment>
<comment type="subunit">
    <text evidence="1">Component of the pre-66S ribosomal particle.</text>
</comment>
<comment type="subcellular location">
    <subcellularLocation>
        <location evidence="1">Nucleus</location>
        <location evidence="1">Nucleolus</location>
    </subcellularLocation>
</comment>
<comment type="similarity">
    <text evidence="3">Belongs to the NOP16 family.</text>
</comment>
<sequence length="231" mass="26965">MVSVRKRKMARSSVKKNTRRRKDKQRDINIHSNPIIAKNWDKSLTLKQNYKRLGLRSKLGNIAGGVEQKVETLTEIRNKRRAKLELLLLLQSVSIEEIEETEDPSRIPIGEARIIRDPETNEVLRVIYGTMKVDGDDNDNVSDAAEETEEREGQGANSVIKELEEYAAKHAKVRKERHMSDRESEWAKALYEKYGDDYERMKWDKKLNVYQQSAGDLKRRITKWKKANNIQ</sequence>
<name>NOP16_LODEL</name>
<proteinExistence type="inferred from homology"/>
<organism>
    <name type="scientific">Lodderomyces elongisporus (strain ATCC 11503 / CBS 2605 / JCM 1781 / NBRC 1676 / NRRL YB-4239)</name>
    <name type="common">Yeast</name>
    <name type="synonym">Saccharomyces elongisporus</name>
    <dbReference type="NCBI Taxonomy" id="379508"/>
    <lineage>
        <taxon>Eukaryota</taxon>
        <taxon>Fungi</taxon>
        <taxon>Dikarya</taxon>
        <taxon>Ascomycota</taxon>
        <taxon>Saccharomycotina</taxon>
        <taxon>Pichiomycetes</taxon>
        <taxon>Debaryomycetaceae</taxon>
        <taxon>Candida/Lodderomyces clade</taxon>
        <taxon>Lodderomyces</taxon>
    </lineage>
</organism>
<feature type="chain" id="PRO_0000320378" description="Nucleolar protein 16">
    <location>
        <begin position="1"/>
        <end position="231"/>
    </location>
</feature>
<feature type="region of interest" description="Disordered" evidence="2">
    <location>
        <begin position="1"/>
        <end position="28"/>
    </location>
</feature>
<feature type="region of interest" description="Disordered" evidence="2">
    <location>
        <begin position="135"/>
        <end position="156"/>
    </location>
</feature>
<feature type="compositionally biased region" description="Basic residues" evidence="2">
    <location>
        <begin position="1"/>
        <end position="23"/>
    </location>
</feature>
<feature type="compositionally biased region" description="Acidic residues" evidence="2">
    <location>
        <begin position="136"/>
        <end position="150"/>
    </location>
</feature>
<reference key="1">
    <citation type="journal article" date="2009" name="Nature">
        <title>Evolution of pathogenicity and sexual reproduction in eight Candida genomes.</title>
        <authorList>
            <person name="Butler G."/>
            <person name="Rasmussen M.D."/>
            <person name="Lin M.F."/>
            <person name="Santos M.A.S."/>
            <person name="Sakthikumar S."/>
            <person name="Munro C.A."/>
            <person name="Rheinbay E."/>
            <person name="Grabherr M."/>
            <person name="Forche A."/>
            <person name="Reedy J.L."/>
            <person name="Agrafioti I."/>
            <person name="Arnaud M.B."/>
            <person name="Bates S."/>
            <person name="Brown A.J.P."/>
            <person name="Brunke S."/>
            <person name="Costanzo M.C."/>
            <person name="Fitzpatrick D.A."/>
            <person name="de Groot P.W.J."/>
            <person name="Harris D."/>
            <person name="Hoyer L.L."/>
            <person name="Hube B."/>
            <person name="Klis F.M."/>
            <person name="Kodira C."/>
            <person name="Lennard N."/>
            <person name="Logue M.E."/>
            <person name="Martin R."/>
            <person name="Neiman A.M."/>
            <person name="Nikolaou E."/>
            <person name="Quail M.A."/>
            <person name="Quinn J."/>
            <person name="Santos M.C."/>
            <person name="Schmitzberger F.F."/>
            <person name="Sherlock G."/>
            <person name="Shah P."/>
            <person name="Silverstein K.A.T."/>
            <person name="Skrzypek M.S."/>
            <person name="Soll D."/>
            <person name="Staggs R."/>
            <person name="Stansfield I."/>
            <person name="Stumpf M.P.H."/>
            <person name="Sudbery P.E."/>
            <person name="Srikantha T."/>
            <person name="Zeng Q."/>
            <person name="Berman J."/>
            <person name="Berriman M."/>
            <person name="Heitman J."/>
            <person name="Gow N.A.R."/>
            <person name="Lorenz M.C."/>
            <person name="Birren B.W."/>
            <person name="Kellis M."/>
            <person name="Cuomo C.A."/>
        </authorList>
    </citation>
    <scope>NUCLEOTIDE SEQUENCE [LARGE SCALE GENOMIC DNA]</scope>
    <source>
        <strain>ATCC 11503 / BCRC 21390 / CBS 2605 / JCM 1781 / NBRC 1676 / NRRL YB-4239</strain>
    </source>
</reference>
<protein>
    <recommendedName>
        <fullName>Nucleolar protein 16</fullName>
    </recommendedName>
</protein>